<comment type="function">
    <text>Receptor that may have an important role in cell/cell signaling during nervous system formation.</text>
</comment>
<comment type="subunit">
    <text evidence="5">Heterodimer of 2 chains generated by proteolytic processing; the large extracellular N-terminal fragment and the membrane-bound C-terminal fragment predominantly remain associated and non-covalently linked.</text>
</comment>
<comment type="subcellular location">
    <subcellularLocation>
        <location>Cell membrane</location>
        <topology>Multi-pass membrane protein</topology>
    </subcellularLocation>
</comment>
<comment type="tissue specificity">
    <text>Highest expression in brain and testis.</text>
</comment>
<comment type="PTM">
    <text evidence="1">The iron and 2-oxoglutarate dependent 3-hydroxylation of aspartate and asparagine is (R) stereospecific within EGF domains.</text>
</comment>
<comment type="PTM">
    <text evidence="5">Autoproteolytically processed at the GPS region of the GAIN-B domain; this cleavage modulates receptor activity.</text>
</comment>
<comment type="similarity">
    <text evidence="11">Belongs to the G-protein coupled receptor 2 family. LN-TM7 subfamily.</text>
</comment>
<dbReference type="EMBL" id="AF234887">
    <property type="protein sequence ID" value="AAG00080.1"/>
    <property type="molecule type" value="mRNA"/>
</dbReference>
<dbReference type="EMBL" id="AB065955">
    <property type="protein sequence ID" value="BAC06168.1"/>
    <property type="molecule type" value="Genomic_DNA"/>
</dbReference>
<dbReference type="EMBL" id="AL390252">
    <property type="status" value="NOT_ANNOTATED_CDS"/>
    <property type="molecule type" value="Genomic_DNA"/>
</dbReference>
<dbReference type="EMBL" id="D87469">
    <property type="protein sequence ID" value="BAA13407.2"/>
    <property type="molecule type" value="mRNA"/>
</dbReference>
<dbReference type="CCDS" id="CCDS796.1"/>
<dbReference type="RefSeq" id="NP_001399.1">
    <property type="nucleotide sequence ID" value="NM_001408.3"/>
</dbReference>
<dbReference type="SMR" id="Q9HCU4"/>
<dbReference type="BioGRID" id="108272">
    <property type="interactions" value="125"/>
</dbReference>
<dbReference type="FunCoup" id="Q9HCU4">
    <property type="interactions" value="1476"/>
</dbReference>
<dbReference type="IntAct" id="Q9HCU4">
    <property type="interactions" value="86"/>
</dbReference>
<dbReference type="STRING" id="9606.ENSP00000271332"/>
<dbReference type="MEROPS" id="P02.006"/>
<dbReference type="GlyConnect" id="1055">
    <property type="glycosylation" value="9 N-Linked glycans (5 sites)"/>
</dbReference>
<dbReference type="GlyCosmos" id="Q9HCU4">
    <property type="glycosylation" value="18 sites, 10 glycans"/>
</dbReference>
<dbReference type="GlyGen" id="Q9HCU4">
    <property type="glycosylation" value="22 sites, 25 N-linked glycans (13 sites), 3 O-linked glycans (4 sites)"/>
</dbReference>
<dbReference type="iPTMnet" id="Q9HCU4"/>
<dbReference type="PhosphoSitePlus" id="Q9HCU4"/>
<dbReference type="SwissPalm" id="Q9HCU4"/>
<dbReference type="BioMuta" id="CELSR2"/>
<dbReference type="DMDM" id="22095550"/>
<dbReference type="jPOST" id="Q9HCU4"/>
<dbReference type="MassIVE" id="Q9HCU4"/>
<dbReference type="PaxDb" id="9606-ENSP00000271332"/>
<dbReference type="PeptideAtlas" id="Q9HCU4"/>
<dbReference type="ProteomicsDB" id="81800"/>
<dbReference type="Pumba" id="Q9HCU4"/>
<dbReference type="Antibodypedia" id="2940">
    <property type="antibodies" value="217 antibodies from 30 providers"/>
</dbReference>
<dbReference type="DNASU" id="1952"/>
<dbReference type="Ensembl" id="ENST00000271332.4">
    <property type="protein sequence ID" value="ENSP00000271332.3"/>
    <property type="gene ID" value="ENSG00000143126.8"/>
</dbReference>
<dbReference type="GeneID" id="1952"/>
<dbReference type="KEGG" id="hsa:1952"/>
<dbReference type="MANE-Select" id="ENST00000271332.4">
    <property type="protein sequence ID" value="ENSP00000271332.3"/>
    <property type="RefSeq nucleotide sequence ID" value="NM_001408.3"/>
    <property type="RefSeq protein sequence ID" value="NP_001399.1"/>
</dbReference>
<dbReference type="UCSC" id="uc001dxa.5">
    <property type="organism name" value="human"/>
</dbReference>
<dbReference type="AGR" id="HGNC:3231"/>
<dbReference type="CTD" id="1952"/>
<dbReference type="DisGeNET" id="1952"/>
<dbReference type="GeneCards" id="CELSR2"/>
<dbReference type="HGNC" id="HGNC:3231">
    <property type="gene designation" value="CELSR2"/>
</dbReference>
<dbReference type="HPA" id="ENSG00000143126">
    <property type="expression patterns" value="Tissue enhanced (brain, skin)"/>
</dbReference>
<dbReference type="MalaCards" id="CELSR2"/>
<dbReference type="MIM" id="604265">
    <property type="type" value="gene"/>
</dbReference>
<dbReference type="neXtProt" id="NX_Q9HCU4"/>
<dbReference type="OpenTargets" id="ENSG00000143126"/>
<dbReference type="PharmGKB" id="PA26394"/>
<dbReference type="VEuPathDB" id="HostDB:ENSG00000143126"/>
<dbReference type="eggNOG" id="KOG4289">
    <property type="taxonomic scope" value="Eukaryota"/>
</dbReference>
<dbReference type="GeneTree" id="ENSGT00940000157493"/>
<dbReference type="HOGENOM" id="CLU_000158_1_0_1"/>
<dbReference type="InParanoid" id="Q9HCU4"/>
<dbReference type="OMA" id="FTLYIVE"/>
<dbReference type="OrthoDB" id="26203at2759"/>
<dbReference type="PAN-GO" id="Q9HCU4">
    <property type="GO annotations" value="1 GO annotation based on evolutionary models"/>
</dbReference>
<dbReference type="PhylomeDB" id="Q9HCU4"/>
<dbReference type="TreeFam" id="TF323983"/>
<dbReference type="PathwayCommons" id="Q9HCU4"/>
<dbReference type="SignaLink" id="Q9HCU4"/>
<dbReference type="BioGRID-ORCS" id="1952">
    <property type="hits" value="116 hits in 1156 CRISPR screens"/>
</dbReference>
<dbReference type="ChiTaRS" id="CELSR2">
    <property type="organism name" value="human"/>
</dbReference>
<dbReference type="GeneWiki" id="CELSR2"/>
<dbReference type="GenomeRNAi" id="1952"/>
<dbReference type="Pharos" id="Q9HCU4">
    <property type="development level" value="Tbio"/>
</dbReference>
<dbReference type="PRO" id="PR:Q9HCU4"/>
<dbReference type="Proteomes" id="UP000005640">
    <property type="component" value="Chromosome 1"/>
</dbReference>
<dbReference type="RNAct" id="Q9HCU4">
    <property type="molecule type" value="protein"/>
</dbReference>
<dbReference type="Bgee" id="ENSG00000143126">
    <property type="expression patterns" value="Expressed in ganglionic eminence and 167 other cell types or tissues"/>
</dbReference>
<dbReference type="GO" id="GO:0005737">
    <property type="term" value="C:cytoplasm"/>
    <property type="evidence" value="ECO:0000250"/>
    <property type="project" value="BHF-UCL"/>
</dbReference>
<dbReference type="GO" id="GO:0016020">
    <property type="term" value="C:membrane"/>
    <property type="evidence" value="ECO:0000303"/>
    <property type="project" value="UniProtKB"/>
</dbReference>
<dbReference type="GO" id="GO:0005886">
    <property type="term" value="C:plasma membrane"/>
    <property type="evidence" value="ECO:0000250"/>
    <property type="project" value="BHF-UCL"/>
</dbReference>
<dbReference type="GO" id="GO:0005509">
    <property type="term" value="F:calcium ion binding"/>
    <property type="evidence" value="ECO:0007669"/>
    <property type="project" value="InterPro"/>
</dbReference>
<dbReference type="GO" id="GO:0004930">
    <property type="term" value="F:G protein-coupled receptor activity"/>
    <property type="evidence" value="ECO:0000303"/>
    <property type="project" value="UniProtKB"/>
</dbReference>
<dbReference type="GO" id="GO:0098609">
    <property type="term" value="P:cell-cell adhesion"/>
    <property type="evidence" value="ECO:0000318"/>
    <property type="project" value="GO_Central"/>
</dbReference>
<dbReference type="GO" id="GO:0033326">
    <property type="term" value="P:cerebrospinal fluid secretion"/>
    <property type="evidence" value="ECO:0007669"/>
    <property type="project" value="Ensembl"/>
</dbReference>
<dbReference type="GO" id="GO:0060271">
    <property type="term" value="P:cilium assembly"/>
    <property type="evidence" value="ECO:0007669"/>
    <property type="project" value="Ensembl"/>
</dbReference>
<dbReference type="GO" id="GO:0003341">
    <property type="term" value="P:cilium movement"/>
    <property type="evidence" value="ECO:0007669"/>
    <property type="project" value="Ensembl"/>
</dbReference>
<dbReference type="GO" id="GO:0048813">
    <property type="term" value="P:dendrite morphogenesis"/>
    <property type="evidence" value="ECO:0000250"/>
    <property type="project" value="BHF-UCL"/>
</dbReference>
<dbReference type="GO" id="GO:0007186">
    <property type="term" value="P:G protein-coupled receptor signaling pathway"/>
    <property type="evidence" value="ECO:0000303"/>
    <property type="project" value="UniProtKB"/>
</dbReference>
<dbReference type="GO" id="GO:0007156">
    <property type="term" value="P:homophilic cell adhesion via plasma membrane adhesion molecules"/>
    <property type="evidence" value="ECO:0000250"/>
    <property type="project" value="BHF-UCL"/>
</dbReference>
<dbReference type="GO" id="GO:0097475">
    <property type="term" value="P:motor neuron migration"/>
    <property type="evidence" value="ECO:0007669"/>
    <property type="project" value="Ensembl"/>
</dbReference>
<dbReference type="GO" id="GO:0021999">
    <property type="term" value="P:neural plate anterior/posterior regionalization"/>
    <property type="evidence" value="ECO:0000250"/>
    <property type="project" value="BHF-UCL"/>
</dbReference>
<dbReference type="GO" id="GO:0022407">
    <property type="term" value="P:regulation of cell-cell adhesion"/>
    <property type="evidence" value="ECO:0000250"/>
    <property type="project" value="BHF-UCL"/>
</dbReference>
<dbReference type="GO" id="GO:0006355">
    <property type="term" value="P:regulation of DNA-templated transcription"/>
    <property type="evidence" value="ECO:0000250"/>
    <property type="project" value="BHF-UCL"/>
</dbReference>
<dbReference type="GO" id="GO:0032880">
    <property type="term" value="P:regulation of protein localization"/>
    <property type="evidence" value="ECO:0007669"/>
    <property type="project" value="Ensembl"/>
</dbReference>
<dbReference type="GO" id="GO:0021591">
    <property type="term" value="P:ventricular system development"/>
    <property type="evidence" value="ECO:0007669"/>
    <property type="project" value="Ensembl"/>
</dbReference>
<dbReference type="GO" id="GO:0016055">
    <property type="term" value="P:Wnt signaling pathway"/>
    <property type="evidence" value="ECO:0000250"/>
    <property type="project" value="BHF-UCL"/>
</dbReference>
<dbReference type="GO" id="GO:0060071">
    <property type="term" value="P:Wnt signaling pathway, planar cell polarity pathway"/>
    <property type="evidence" value="ECO:0000303"/>
    <property type="project" value="ParkinsonsUK-UCL"/>
</dbReference>
<dbReference type="CDD" id="cd11304">
    <property type="entry name" value="Cadherin_repeat"/>
    <property type="match status" value="9"/>
</dbReference>
<dbReference type="CDD" id="cd00054">
    <property type="entry name" value="EGF_CA"/>
    <property type="match status" value="5"/>
</dbReference>
<dbReference type="CDD" id="cd00055">
    <property type="entry name" value="EGF_Lam"/>
    <property type="match status" value="1"/>
</dbReference>
<dbReference type="CDD" id="cd00110">
    <property type="entry name" value="LamG"/>
    <property type="match status" value="2"/>
</dbReference>
<dbReference type="FunFam" id="2.10.25.10:FF:000011">
    <property type="entry name" value="Cadherin EGF LAG seven-pass G-type receptor"/>
    <property type="match status" value="1"/>
</dbReference>
<dbReference type="FunFam" id="2.60.40.60:FF:000013">
    <property type="entry name" value="Cadherin EGF LAG seven-pass G-type receptor"/>
    <property type="match status" value="1"/>
</dbReference>
<dbReference type="FunFam" id="1.20.1070.10:FF:000112">
    <property type="entry name" value="Cadherin EGF LAG seven-pass G-type receptor 2"/>
    <property type="match status" value="1"/>
</dbReference>
<dbReference type="FunFam" id="2.60.120.200:FF:000020">
    <property type="entry name" value="Cadherin EGF LAG seven-pass G-type receptor 2"/>
    <property type="match status" value="1"/>
</dbReference>
<dbReference type="FunFam" id="2.60.120.200:FF:000062">
    <property type="entry name" value="Cadherin EGF LAG seven-pass G-type receptor 2"/>
    <property type="match status" value="1"/>
</dbReference>
<dbReference type="FunFam" id="2.60.220.50:FF:000005">
    <property type="entry name" value="Cadherin EGF LAG seven-pass G-type receptor 2"/>
    <property type="match status" value="1"/>
</dbReference>
<dbReference type="FunFam" id="1.25.40.610:FF:000005">
    <property type="entry name" value="cadherin EGF LAG seven-pass G-type receptor 2"/>
    <property type="match status" value="1"/>
</dbReference>
<dbReference type="FunFam" id="2.10.25.10:FF:000156">
    <property type="entry name" value="cadherin EGF LAG seven-pass G-type receptor 2"/>
    <property type="match status" value="1"/>
</dbReference>
<dbReference type="FunFam" id="2.10.25.10:FF:000285">
    <property type="entry name" value="cadherin EGF LAG seven-pass G-type receptor 2"/>
    <property type="match status" value="1"/>
</dbReference>
<dbReference type="FunFam" id="2.10.25.10:FF:000089">
    <property type="entry name" value="Cadherin EGF LAG seven-pass G-type receptor 3"/>
    <property type="match status" value="1"/>
</dbReference>
<dbReference type="FunFam" id="2.60.40.60:FF:000010">
    <property type="entry name" value="Cadherin EGF LAG seven-pass G-type receptor 3"/>
    <property type="match status" value="2"/>
</dbReference>
<dbReference type="FunFam" id="2.60.40.60:FF:000023">
    <property type="entry name" value="Cadherin EGF LAG seven-pass G-type receptor 3"/>
    <property type="match status" value="2"/>
</dbReference>
<dbReference type="FunFam" id="2.60.40.60:FF:000029">
    <property type="entry name" value="Cadherin EGF LAG seven-pass G-type receptor 3"/>
    <property type="match status" value="1"/>
</dbReference>
<dbReference type="FunFam" id="2.60.40.60:FF:000038">
    <property type="entry name" value="Cadherin EGF LAG seven-pass G-type receptor 3"/>
    <property type="match status" value="1"/>
</dbReference>
<dbReference type="FunFam" id="2.60.40.60:FF:000040">
    <property type="entry name" value="cadherin EGF LAG seven-pass G-type receptor 3"/>
    <property type="match status" value="1"/>
</dbReference>
<dbReference type="FunFam" id="2.10.25.10:FF:000113">
    <property type="entry name" value="Cadherin, EGF LAG seven-pass G-type receptor 3"/>
    <property type="match status" value="1"/>
</dbReference>
<dbReference type="FunFam" id="2.60.40.60:FF:000044">
    <property type="entry name" value="Cadherin, EGF LAG seven-pass G-type receptor 3"/>
    <property type="match status" value="1"/>
</dbReference>
<dbReference type="FunFam" id="4.10.1240.10:FF:000003">
    <property type="entry name" value="Putative cadherin EGF LAG seven-pass G-type receptor 2"/>
    <property type="match status" value="1"/>
</dbReference>
<dbReference type="FunFam" id="2.10.25.10:FF:000864">
    <property type="entry name" value="Y-linked cadherin EGF LAG seven-pass G-type receptor 2"/>
    <property type="match status" value="1"/>
</dbReference>
<dbReference type="Gene3D" id="1.25.40.610">
    <property type="match status" value="1"/>
</dbReference>
<dbReference type="Gene3D" id="2.60.120.200">
    <property type="match status" value="2"/>
</dbReference>
<dbReference type="Gene3D" id="2.60.220.50">
    <property type="match status" value="1"/>
</dbReference>
<dbReference type="Gene3D" id="2.60.40.60">
    <property type="entry name" value="Cadherins"/>
    <property type="match status" value="9"/>
</dbReference>
<dbReference type="Gene3D" id="4.10.1240.10">
    <property type="entry name" value="GPCR, family 2, extracellular hormone receptor domain"/>
    <property type="match status" value="1"/>
</dbReference>
<dbReference type="Gene3D" id="2.10.25.10">
    <property type="entry name" value="Laminin"/>
    <property type="match status" value="7"/>
</dbReference>
<dbReference type="Gene3D" id="1.20.1070.10">
    <property type="entry name" value="Rhodopsin 7-helix transmembrane proteins"/>
    <property type="match status" value="1"/>
</dbReference>
<dbReference type="InterPro" id="IPR002126">
    <property type="entry name" value="Cadherin-like_dom"/>
</dbReference>
<dbReference type="InterPro" id="IPR015919">
    <property type="entry name" value="Cadherin-like_sf"/>
</dbReference>
<dbReference type="InterPro" id="IPR056286">
    <property type="entry name" value="Cadherin_CELSR1-3_9th"/>
</dbReference>
<dbReference type="InterPro" id="IPR020894">
    <property type="entry name" value="Cadherin_CS"/>
</dbReference>
<dbReference type="InterPro" id="IPR013320">
    <property type="entry name" value="ConA-like_dom_sf"/>
</dbReference>
<dbReference type="InterPro" id="IPR001881">
    <property type="entry name" value="EGF-like_Ca-bd_dom"/>
</dbReference>
<dbReference type="InterPro" id="IPR000742">
    <property type="entry name" value="EGF-like_dom"/>
</dbReference>
<dbReference type="InterPro" id="IPR000152">
    <property type="entry name" value="EGF-type_Asp/Asn_hydroxyl_site"/>
</dbReference>
<dbReference type="InterPro" id="IPR057244">
    <property type="entry name" value="GAIN_B"/>
</dbReference>
<dbReference type="InterPro" id="IPR032471">
    <property type="entry name" value="GAIN_dom_N"/>
</dbReference>
<dbReference type="InterPro" id="IPR046338">
    <property type="entry name" value="GAIN_dom_sf"/>
</dbReference>
<dbReference type="InterPro" id="IPR017981">
    <property type="entry name" value="GPCR_2-like_7TM"/>
</dbReference>
<dbReference type="InterPro" id="IPR036445">
    <property type="entry name" value="GPCR_2_extracell_dom_sf"/>
</dbReference>
<dbReference type="InterPro" id="IPR001879">
    <property type="entry name" value="GPCR_2_extracellular_dom"/>
</dbReference>
<dbReference type="InterPro" id="IPR000832">
    <property type="entry name" value="GPCR_2_secretin-like"/>
</dbReference>
<dbReference type="InterPro" id="IPR000203">
    <property type="entry name" value="GPS"/>
</dbReference>
<dbReference type="InterPro" id="IPR009030">
    <property type="entry name" value="Growth_fac_rcpt_cys_sf"/>
</dbReference>
<dbReference type="InterPro" id="IPR001791">
    <property type="entry name" value="Laminin_G"/>
</dbReference>
<dbReference type="InterPro" id="IPR002049">
    <property type="entry name" value="LE_dom"/>
</dbReference>
<dbReference type="PANTHER" id="PTHR24026:SF32">
    <property type="entry name" value="CADHERIN EGF LAG SEVEN-PASS G-TYPE RECEPTOR 2"/>
    <property type="match status" value="1"/>
</dbReference>
<dbReference type="PANTHER" id="PTHR24026">
    <property type="entry name" value="FAT ATYPICAL CADHERIN-RELATED"/>
    <property type="match status" value="1"/>
</dbReference>
<dbReference type="Pfam" id="PF00002">
    <property type="entry name" value="7tm_2"/>
    <property type="match status" value="1"/>
</dbReference>
<dbReference type="Pfam" id="PF00028">
    <property type="entry name" value="Cadherin"/>
    <property type="match status" value="8"/>
</dbReference>
<dbReference type="Pfam" id="PF23592">
    <property type="entry name" value="Cadherin_CELSR2_9th"/>
    <property type="match status" value="1"/>
</dbReference>
<dbReference type="Pfam" id="PF00008">
    <property type="entry name" value="EGF"/>
    <property type="match status" value="1"/>
</dbReference>
<dbReference type="Pfam" id="PF00053">
    <property type="entry name" value="EGF_laminin"/>
    <property type="match status" value="1"/>
</dbReference>
<dbReference type="Pfam" id="PF16489">
    <property type="entry name" value="GAIN"/>
    <property type="match status" value="1"/>
</dbReference>
<dbReference type="Pfam" id="PF01825">
    <property type="entry name" value="GPS"/>
    <property type="match status" value="1"/>
</dbReference>
<dbReference type="Pfam" id="PF02210">
    <property type="entry name" value="Laminin_G_2"/>
    <property type="match status" value="2"/>
</dbReference>
<dbReference type="PRINTS" id="PR00205">
    <property type="entry name" value="CADHERIN"/>
</dbReference>
<dbReference type="PRINTS" id="PR00249">
    <property type="entry name" value="GPCRSECRETIN"/>
</dbReference>
<dbReference type="SMART" id="SM00112">
    <property type="entry name" value="CA"/>
    <property type="match status" value="9"/>
</dbReference>
<dbReference type="SMART" id="SM00181">
    <property type="entry name" value="EGF"/>
    <property type="match status" value="6"/>
</dbReference>
<dbReference type="SMART" id="SM00179">
    <property type="entry name" value="EGF_CA"/>
    <property type="match status" value="5"/>
</dbReference>
<dbReference type="SMART" id="SM00180">
    <property type="entry name" value="EGF_Lam"/>
    <property type="match status" value="1"/>
</dbReference>
<dbReference type="SMART" id="SM00303">
    <property type="entry name" value="GPS"/>
    <property type="match status" value="1"/>
</dbReference>
<dbReference type="SMART" id="SM00008">
    <property type="entry name" value="HormR"/>
    <property type="match status" value="1"/>
</dbReference>
<dbReference type="SMART" id="SM00282">
    <property type="entry name" value="LamG"/>
    <property type="match status" value="2"/>
</dbReference>
<dbReference type="SUPFAM" id="SSF49313">
    <property type="entry name" value="Cadherin-like"/>
    <property type="match status" value="9"/>
</dbReference>
<dbReference type="SUPFAM" id="SSF49899">
    <property type="entry name" value="Concanavalin A-like lectins/glucanases"/>
    <property type="match status" value="2"/>
</dbReference>
<dbReference type="SUPFAM" id="SSF57196">
    <property type="entry name" value="EGF/Laminin"/>
    <property type="match status" value="3"/>
</dbReference>
<dbReference type="SUPFAM" id="SSF57184">
    <property type="entry name" value="Growth factor receptor domain"/>
    <property type="match status" value="1"/>
</dbReference>
<dbReference type="PROSITE" id="PS00010">
    <property type="entry name" value="ASX_HYDROXYL"/>
    <property type="match status" value="2"/>
</dbReference>
<dbReference type="PROSITE" id="PS00232">
    <property type="entry name" value="CADHERIN_1"/>
    <property type="match status" value="7"/>
</dbReference>
<dbReference type="PROSITE" id="PS50268">
    <property type="entry name" value="CADHERIN_2"/>
    <property type="match status" value="9"/>
</dbReference>
<dbReference type="PROSITE" id="PS00022">
    <property type="entry name" value="EGF_1"/>
    <property type="match status" value="6"/>
</dbReference>
<dbReference type="PROSITE" id="PS01186">
    <property type="entry name" value="EGF_2"/>
    <property type="match status" value="4"/>
</dbReference>
<dbReference type="PROSITE" id="PS50026">
    <property type="entry name" value="EGF_3"/>
    <property type="match status" value="6"/>
</dbReference>
<dbReference type="PROSITE" id="PS01248">
    <property type="entry name" value="EGF_LAM_1"/>
    <property type="match status" value="1"/>
</dbReference>
<dbReference type="PROSITE" id="PS50027">
    <property type="entry name" value="EGF_LAM_2"/>
    <property type="match status" value="2"/>
</dbReference>
<dbReference type="PROSITE" id="PS50227">
    <property type="entry name" value="G_PROTEIN_RECEP_F2_3"/>
    <property type="match status" value="1"/>
</dbReference>
<dbReference type="PROSITE" id="PS50261">
    <property type="entry name" value="G_PROTEIN_RECEP_F2_4"/>
    <property type="match status" value="1"/>
</dbReference>
<dbReference type="PROSITE" id="PS50221">
    <property type="entry name" value="GAIN_B"/>
    <property type="match status" value="1"/>
</dbReference>
<dbReference type="PROSITE" id="PS50025">
    <property type="entry name" value="LAM_G_DOMAIN"/>
    <property type="match status" value="2"/>
</dbReference>
<sequence>MRSPATGVPLPTPPPPLLLLLLLLLPPPLLGDQVGPCRSLGSRGRGSSGACAPMGWLCPSSASNLWLYTSRCRDAGTELTGHLVPHHDGLRVWCPESEAHIPLPPAPEGCPWSCRLLGIGGHLSPQGKLTLPEEHPCLKAPRLRCQSCKLAQAPGLRAGERSPEESLGGRRKRNVNTAPQFQPPSYQATVPENQPAGTPVASLRAIDPDEGEAGRLEYTMDALFDSRSNQFFSLDPVTGAVTTAEELDRETKSTHVFRVTAQDHGMPRRSALATLTILVTDTNDHDPVFEQQEYKESLRENLEVGYEVLTVRATDGDAPPNANILYRLLEGSGGSPSEVFEIDPRSGVIRTRGPVDREEVESYQLTVEASDQGRDPGPRSTTAAVFLSVEDDNDNAPQFSEKRYVVQVREDVTPGAPVLRVTASDRDKGSNAVVHYSIMSGNARGQFYLDAQTGALDVVSPLDYETTKEYTLRVRAQDGGRPPLSNVSGLVTVQVLDINDNAPIFVSTPFQATVLESVPLGYLVLHVQAIDADAGDNARLEYRLAGVGHDFPFTINNGTGWISVAAELDREEVDFYSFGVEARDHGTPALTASASVSVTVLDVNDNNPTFTQPEYTVRLNEDAAVGTSVVTVSAVDRDAHSVITYQITSGNTRNRFSITSQSGGGLVSLALPLDYKLERQYVLAVTASDGTRQDTAQIVVNVTDANTHRPVFQSSHYTVNVNEDRPAGTTVVLISATDEDTGENARITYFMEDSIPQFRIDADTGAVTTQAELDYEDQVSYTLAITARDNGIPQKSDTTYLEILVNDVNDNAPQFLRDSYQGSVYEDVPPFTSVLQISATDRDSGLNGRVFYTFQGGDDGDGDFIVESTSGIVRTLRRLDRENVAQYVLRAYAVDKGMPPARTPMEVTVTVLDVNDNPPVFEQDEFDVFVEENSPIGLAVARVTATDPDEGTNAQIMYQIVEGNIPEVFQLDIFSGELTALVDLDYEDRPEYVLVIQATSAPLVSRATVHVRLLDRNDNPPVLGNFEILFNNYVTNRSSSFPGGAIGRVPAHDPDISDSLTYSFERGNELSLVLLNASTGELKLSRALDNNRPLEAIMSVLVSDGVHSVTAQCALRVTIITDEMLTHSITLRLEDMSPERFLSPLLGLFIQAVAATLATPPDHVVVFNVQRDTDAPGGHILNVSLSVGQPPGPGGGPPFLPSEDLQERLYLNRSLLTAISAQRVLPFDDNICLREPCENYMRCVSVLRFDSSAPFIASSSVLFRPIHPVGGLRCRCPPGFTGDYCETEVDLCYSRPCGPHGRCRSREGGYTCLCRDGYTGEHCEVSARSGRCTPGVCKNGGTCVNLLVGGFKCDCPSGDFEKPYCQVTTRSFPAHSFITFRGLRQRFHFTLALSFATKERDGLLLYNGRFNEKHDFVALEVIQEQVQLTFSAGESTTTVSPFVPGGVSDGQWHTVQLKYYNKPLLGQTGLPQGPSEQKVAVVTVDGCDTGVALRFGSVLGNYSCAAQGTQGGSKKSLDLTGPLLLGGVPDLPESFPVRMRQFVGCMRNLQVDSRHIDMADFIANNGTVPGCPAKKNVCDSNTCHNGGTCVNQWDAFSCECPLGFGGKSCAQEMANPQHFLGSSLVAWHGLSLPISQPWYLSLMFRTRQADGVLLQAITRGRSTITLQLREGHVMLSVEGTGLQASSLRLEPGRANDGDWHHAQLALGASGGPGHAILSFDYGQQRAEGNLGPRLHGLHLSNITVGGIPGPAGGVARGFRGCLQGVRVSDTPEGVNSLDPSHGESINVEQGCSLPDPCDSNPCPANSYCSNDWDSYSCSCDPGYYGDNCTNVCDLNPCEHQSVCTRKPSAPHGYTCECPPNYLGPYCETRIDQPCPRGWWGHPTCGPCNCDVSKGFDPDCNKTSGECHCKENHYRPPGSPTCLLCDCYPTGSLSRVCDPEDGQCPCKPGVIGRQCDRCDNPFAEVTTNGCEVNYDSCPRAIEAGIWWPRTRFGLPAAAPCPKGSFGTAVRHCDEHRGWLPPNLFNCTSITFSELKGFAERLQRNESGLDSGRSQQLALLLRNATQHTAGYFGSDVKVAYQLATRLLAHESTQRGFGLSATQDVHFTENLLRVGSALLDTANKRHWELIQQTEGGTAWLLQHYEAYASALAQNMRHTYLSPFTIVTPNIVISVVRLDKGNFAGAKLPRYEALRGEQPPDLETTVILPESVFRETPPVVRPAGPGEAQEPEELARRQRRHPELSQGEAVASVIIYRTLAGLLPHNYDPDKRSLRVPKRPIINTPVVSISVHDDEELLPRALDKPVTVQFRLLETEERTKPICVFWNHSILVSGTGGWSARGCEVVFRNESHVSCQCNHMTSFAVLMDVSRRENGEILPLKTLTYVALGVTLAALLLTFFFLTLLRILRSNQHGIRRNLTAALGLAQLVFLLGINQADLPFACTVIAILLHFLYLCTFSWALLEALHLYRALTEVRDVNTGPMRFYYMLGWGVPAFITGLAVGLDPEGYGNPDFCWLSIYDTLIWSFAGPVAFAVSMSVFLYILAARASCAAQRQGFEKKGPVSGLQPSFAVLLLLSATWLLALLSVNSDTLLFHYLFATCNCIQGPFIFLSYVVLSKEVRKALKLACSRKPSPDPALTTKSTLTSSYNCPSPYADGRLYQPYGDSAGSLHSTSRSGKSQPSYIPFLLREESALNPGQGPPGLGDPGSLFLEGQDQQHDPDTDSDSDLSLEDDQSGSYASTHSSDSEEEEEEEEEEAAFPGEQGWDSLLGPGAERLPLHSTPKDGGPGPGKAPWPGDFGTTAKESSGNGAPEERLRENGDALSREGSLGPLPGSSAQPHKGILKKKCLPTISEKSSLLRLPLEQCTGSSRGSSASEGSRGGPPPRPPPRQSLQEQLNGVMPIAMSIKAGTVDEDSSGSEFLFFNFLH</sequence>
<keyword id="KW-0106">Calcium</keyword>
<keyword id="KW-1003">Cell membrane</keyword>
<keyword id="KW-0217">Developmental protein</keyword>
<keyword id="KW-1015">Disulfide bond</keyword>
<keyword id="KW-0245">EGF-like domain</keyword>
<keyword id="KW-0297">G-protein coupled receptor</keyword>
<keyword id="KW-0325">Glycoprotein</keyword>
<keyword id="KW-0379">Hydroxylation</keyword>
<keyword id="KW-0424">Laminin EGF-like domain</keyword>
<keyword id="KW-0472">Membrane</keyword>
<keyword id="KW-1267">Proteomics identification</keyword>
<keyword id="KW-0675">Receptor</keyword>
<keyword id="KW-1185">Reference proteome</keyword>
<keyword id="KW-0677">Repeat</keyword>
<keyword id="KW-0732">Signal</keyword>
<keyword id="KW-0807">Transducer</keyword>
<keyword id="KW-0812">Transmembrane</keyword>
<keyword id="KW-1133">Transmembrane helix</keyword>
<protein>
    <recommendedName>
        <fullName evidence="11">Cadherin EGF LAG seven-pass G-type receptor 2</fullName>
    </recommendedName>
    <alternativeName>
        <fullName>Cadherin family member 10</fullName>
    </alternativeName>
    <alternativeName>
        <fullName>Epidermal growth factor-like protein 2</fullName>
        <shortName>EGF-like protein 2</shortName>
    </alternativeName>
    <alternativeName>
        <fullName>Flamingo homolog 3</fullName>
    </alternativeName>
    <alternativeName>
        <fullName>Multiple epidermal growth factor-like domains protein 3</fullName>
        <shortName>Multiple EGF-like domains protein 3</shortName>
    </alternativeName>
</protein>
<organism>
    <name type="scientific">Homo sapiens</name>
    <name type="common">Human</name>
    <dbReference type="NCBI Taxonomy" id="9606"/>
    <lineage>
        <taxon>Eukaryota</taxon>
        <taxon>Metazoa</taxon>
        <taxon>Chordata</taxon>
        <taxon>Craniata</taxon>
        <taxon>Vertebrata</taxon>
        <taxon>Euteleostomi</taxon>
        <taxon>Mammalia</taxon>
        <taxon>Eutheria</taxon>
        <taxon>Euarchontoglires</taxon>
        <taxon>Primates</taxon>
        <taxon>Haplorrhini</taxon>
        <taxon>Catarrhini</taxon>
        <taxon>Hominidae</taxon>
        <taxon>Homo</taxon>
    </lineage>
</organism>
<proteinExistence type="evidence at protein level"/>
<accession>Q9HCU4</accession>
<accession>Q5T2Y7</accession>
<accession>Q92566</accession>
<reference key="1">
    <citation type="journal article" date="2000" name="DNA Res.">
        <title>The human homologue of flamingo, EGFL2, encodes a brain-expressed large cadherin-like protein with epidermal growth factor-like domains, and maps to chromosome 1p13.3-p21.1.</title>
        <authorList>
            <person name="Vincent J.B."/>
            <person name="Skaug J."/>
            <person name="Scherer S.W."/>
        </authorList>
    </citation>
    <scope>NUCLEOTIDE SEQUENCE [MRNA]</scope>
</reference>
<reference key="2">
    <citation type="submission" date="2001-07" db="EMBL/GenBank/DDBJ databases">
        <title>Genome-wide discovery and analysis of human seven transmembrane helix receptor genes.</title>
        <authorList>
            <person name="Suwa M."/>
            <person name="Sato T."/>
            <person name="Okouchi I."/>
            <person name="Arita M."/>
            <person name="Futami K."/>
            <person name="Matsumoto S."/>
            <person name="Tsutsumi S."/>
            <person name="Aburatani H."/>
            <person name="Asai K."/>
            <person name="Akiyama Y."/>
        </authorList>
    </citation>
    <scope>NUCLEOTIDE SEQUENCE [GENOMIC DNA]</scope>
</reference>
<reference key="3">
    <citation type="journal article" date="2006" name="Nature">
        <title>The DNA sequence and biological annotation of human chromosome 1.</title>
        <authorList>
            <person name="Gregory S.G."/>
            <person name="Barlow K.F."/>
            <person name="McLay K.E."/>
            <person name="Kaul R."/>
            <person name="Swarbreck D."/>
            <person name="Dunham A."/>
            <person name="Scott C.E."/>
            <person name="Howe K.L."/>
            <person name="Woodfine K."/>
            <person name="Spencer C.C.A."/>
            <person name="Jones M.C."/>
            <person name="Gillson C."/>
            <person name="Searle S."/>
            <person name="Zhou Y."/>
            <person name="Kokocinski F."/>
            <person name="McDonald L."/>
            <person name="Evans R."/>
            <person name="Phillips K."/>
            <person name="Atkinson A."/>
            <person name="Cooper R."/>
            <person name="Jones C."/>
            <person name="Hall R.E."/>
            <person name="Andrews T.D."/>
            <person name="Lloyd C."/>
            <person name="Ainscough R."/>
            <person name="Almeida J.P."/>
            <person name="Ambrose K.D."/>
            <person name="Anderson F."/>
            <person name="Andrew R.W."/>
            <person name="Ashwell R.I.S."/>
            <person name="Aubin K."/>
            <person name="Babbage A.K."/>
            <person name="Bagguley C.L."/>
            <person name="Bailey J."/>
            <person name="Beasley H."/>
            <person name="Bethel G."/>
            <person name="Bird C.P."/>
            <person name="Bray-Allen S."/>
            <person name="Brown J.Y."/>
            <person name="Brown A.J."/>
            <person name="Buckley D."/>
            <person name="Burton J."/>
            <person name="Bye J."/>
            <person name="Carder C."/>
            <person name="Chapman J.C."/>
            <person name="Clark S.Y."/>
            <person name="Clarke G."/>
            <person name="Clee C."/>
            <person name="Cobley V."/>
            <person name="Collier R.E."/>
            <person name="Corby N."/>
            <person name="Coville G.J."/>
            <person name="Davies J."/>
            <person name="Deadman R."/>
            <person name="Dunn M."/>
            <person name="Earthrowl M."/>
            <person name="Ellington A.G."/>
            <person name="Errington H."/>
            <person name="Frankish A."/>
            <person name="Frankland J."/>
            <person name="French L."/>
            <person name="Garner P."/>
            <person name="Garnett J."/>
            <person name="Gay L."/>
            <person name="Ghori M.R.J."/>
            <person name="Gibson R."/>
            <person name="Gilby L.M."/>
            <person name="Gillett W."/>
            <person name="Glithero R.J."/>
            <person name="Grafham D.V."/>
            <person name="Griffiths C."/>
            <person name="Griffiths-Jones S."/>
            <person name="Grocock R."/>
            <person name="Hammond S."/>
            <person name="Harrison E.S.I."/>
            <person name="Hart E."/>
            <person name="Haugen E."/>
            <person name="Heath P.D."/>
            <person name="Holmes S."/>
            <person name="Holt K."/>
            <person name="Howden P.J."/>
            <person name="Hunt A.R."/>
            <person name="Hunt S.E."/>
            <person name="Hunter G."/>
            <person name="Isherwood J."/>
            <person name="James R."/>
            <person name="Johnson C."/>
            <person name="Johnson D."/>
            <person name="Joy A."/>
            <person name="Kay M."/>
            <person name="Kershaw J.K."/>
            <person name="Kibukawa M."/>
            <person name="Kimberley A.M."/>
            <person name="King A."/>
            <person name="Knights A.J."/>
            <person name="Lad H."/>
            <person name="Laird G."/>
            <person name="Lawlor S."/>
            <person name="Leongamornlert D.A."/>
            <person name="Lloyd D.M."/>
            <person name="Loveland J."/>
            <person name="Lovell J."/>
            <person name="Lush M.J."/>
            <person name="Lyne R."/>
            <person name="Martin S."/>
            <person name="Mashreghi-Mohammadi M."/>
            <person name="Matthews L."/>
            <person name="Matthews N.S.W."/>
            <person name="McLaren S."/>
            <person name="Milne S."/>
            <person name="Mistry S."/>
            <person name="Moore M.J.F."/>
            <person name="Nickerson T."/>
            <person name="O'Dell C.N."/>
            <person name="Oliver K."/>
            <person name="Palmeiri A."/>
            <person name="Palmer S.A."/>
            <person name="Parker A."/>
            <person name="Patel D."/>
            <person name="Pearce A.V."/>
            <person name="Peck A.I."/>
            <person name="Pelan S."/>
            <person name="Phelps K."/>
            <person name="Phillimore B.J."/>
            <person name="Plumb R."/>
            <person name="Rajan J."/>
            <person name="Raymond C."/>
            <person name="Rouse G."/>
            <person name="Saenphimmachak C."/>
            <person name="Sehra H.K."/>
            <person name="Sheridan E."/>
            <person name="Shownkeen R."/>
            <person name="Sims S."/>
            <person name="Skuce C.D."/>
            <person name="Smith M."/>
            <person name="Steward C."/>
            <person name="Subramanian S."/>
            <person name="Sycamore N."/>
            <person name="Tracey A."/>
            <person name="Tromans A."/>
            <person name="Van Helmond Z."/>
            <person name="Wall M."/>
            <person name="Wallis J.M."/>
            <person name="White S."/>
            <person name="Whitehead S.L."/>
            <person name="Wilkinson J.E."/>
            <person name="Willey D.L."/>
            <person name="Williams H."/>
            <person name="Wilming L."/>
            <person name="Wray P.W."/>
            <person name="Wu Z."/>
            <person name="Coulson A."/>
            <person name="Vaudin M."/>
            <person name="Sulston J.E."/>
            <person name="Durbin R.M."/>
            <person name="Hubbard T."/>
            <person name="Wooster R."/>
            <person name="Dunham I."/>
            <person name="Carter N.P."/>
            <person name="McVean G."/>
            <person name="Ross M.T."/>
            <person name="Harrow J."/>
            <person name="Olson M.V."/>
            <person name="Beck S."/>
            <person name="Rogers J."/>
            <person name="Bentley D.R."/>
        </authorList>
    </citation>
    <scope>NUCLEOTIDE SEQUENCE [LARGE SCALE GENOMIC DNA]</scope>
</reference>
<reference key="4">
    <citation type="journal article" date="1996" name="DNA Res.">
        <title>Prediction of the coding sequences of unidentified human genes. VI. The coding sequences of 80 new genes (KIAA0201-KIAA0280) deduced by analysis of cDNA clones from cell line KG-1 and brain.</title>
        <authorList>
            <person name="Nagase T."/>
            <person name="Seki N."/>
            <person name="Ishikawa K."/>
            <person name="Ohira M."/>
            <person name="Kawarabayasi Y."/>
            <person name="Ohara O."/>
            <person name="Tanaka A."/>
            <person name="Kotani H."/>
            <person name="Miyajima N."/>
            <person name="Nomura N."/>
        </authorList>
    </citation>
    <scope>NUCLEOTIDE SEQUENCE [LARGE SCALE MRNA] OF 70-2923</scope>
    <scope>VARIANT HIS-1639</scope>
    <source>
        <tissue>Brain</tissue>
    </source>
</reference>
<reference key="5">
    <citation type="submission" date="2005-08" db="EMBL/GenBank/DDBJ databases">
        <authorList>
            <person name="Ohara O."/>
            <person name="Nagase T."/>
            <person name="Kikuno R."/>
            <person name="Nomura N."/>
        </authorList>
    </citation>
    <scope>SEQUENCE REVISION</scope>
</reference>
<reference key="6">
    <citation type="journal article" date="2008" name="Proc. Natl. Acad. Sci. U.S.A.">
        <title>A quantitative atlas of mitotic phosphorylation.</title>
        <authorList>
            <person name="Dephoure N."/>
            <person name="Zhou C."/>
            <person name="Villen J."/>
            <person name="Beausoleil S.A."/>
            <person name="Bakalarski C.E."/>
            <person name="Elledge S.J."/>
            <person name="Gygi S.P."/>
        </authorList>
    </citation>
    <scope>IDENTIFICATION BY MASS SPECTROMETRY [LARGE SCALE ANALYSIS]</scope>
    <source>
        <tissue>Cervix carcinoma</tissue>
    </source>
</reference>
<reference key="7">
    <citation type="journal article" date="2018" name="Neuron">
        <title>De Novo Mutation in Genes Regulating Neural Stem Cell Fate in Human Congenital Hydrocephalus.</title>
        <authorList>
            <person name="Furey C.G."/>
            <person name="Choi J."/>
            <person name="Jin S.C."/>
            <person name="Zeng X."/>
            <person name="Timberlake A.T."/>
            <person name="Nelson-Williams C."/>
            <person name="Mansuri M.S."/>
            <person name="Lu Q."/>
            <person name="Duran D."/>
            <person name="Panchagnula S."/>
            <person name="Allocco A."/>
            <person name="Karimy J.K."/>
            <person name="Khanna A."/>
            <person name="Gaillard J.R."/>
            <person name="DeSpenza T."/>
            <person name="Antwi P."/>
            <person name="Loring E."/>
            <person name="Butler W.E."/>
            <person name="Smith E.R."/>
            <person name="Warf B.C."/>
            <person name="Strahle J.M."/>
            <person name="Limbrick D.D."/>
            <person name="Storm P.B."/>
            <person name="Heuer G."/>
            <person name="Jackson E.M."/>
            <person name="Iskandar B.J."/>
            <person name="Johnston J.M."/>
            <person name="Tikhonova I."/>
            <person name="Castaldi C."/>
            <person name="Lopez-Giraldez F."/>
            <person name="Bjornson R.D."/>
            <person name="Knight J.R."/>
            <person name="Bilguvar K."/>
            <person name="Mane S."/>
            <person name="Alper S.L."/>
            <person name="Haider S."/>
            <person name="Guclu B."/>
            <person name="Bayri Y."/>
            <person name="Sahin Y."/>
            <person name="Apuzzo M.L.J."/>
            <person name="Duncan C.C."/>
            <person name="DiLuna M.L."/>
            <person name="Guenel M."/>
            <person name="Lifton R.P."/>
            <person name="Kahle K.T."/>
        </authorList>
    </citation>
    <scope>VARIANT TRP-2812</scope>
</reference>
<gene>
    <name evidence="12" type="primary">CELSR2</name>
    <name type="synonym">CDHF10</name>
    <name type="synonym">EGFL2</name>
    <name type="synonym">KIAA0279</name>
    <name type="synonym">MEGF3</name>
</gene>
<name>CELR2_HUMAN</name>
<evidence type="ECO:0000250" key="1"/>
<evidence type="ECO:0000255" key="2"/>
<evidence type="ECO:0000255" key="3">
    <source>
        <dbReference type="PROSITE-ProRule" id="PRU00043"/>
    </source>
</evidence>
<evidence type="ECO:0000255" key="4">
    <source>
        <dbReference type="PROSITE-ProRule" id="PRU00076"/>
    </source>
</evidence>
<evidence type="ECO:0000255" key="5">
    <source>
        <dbReference type="PROSITE-ProRule" id="PRU00098"/>
    </source>
</evidence>
<evidence type="ECO:0000255" key="6">
    <source>
        <dbReference type="PROSITE-ProRule" id="PRU00122"/>
    </source>
</evidence>
<evidence type="ECO:0000255" key="7">
    <source>
        <dbReference type="PROSITE-ProRule" id="PRU00460"/>
    </source>
</evidence>
<evidence type="ECO:0000256" key="8">
    <source>
        <dbReference type="SAM" id="MobiDB-lite"/>
    </source>
</evidence>
<evidence type="ECO:0000269" key="9">
    <source>
    </source>
</evidence>
<evidence type="ECO:0000269" key="10">
    <source>
    </source>
</evidence>
<evidence type="ECO:0000305" key="11"/>
<evidence type="ECO:0000312" key="12">
    <source>
        <dbReference type="HGNC" id="HGNC:3231"/>
    </source>
</evidence>
<feature type="signal peptide" evidence="2">
    <location>
        <begin position="1"/>
        <end position="31"/>
    </location>
</feature>
<feature type="chain" id="PRO_0000012916" description="Cadherin EGF LAG seven-pass G-type receptor 2">
    <location>
        <begin position="32"/>
        <end position="2923"/>
    </location>
</feature>
<feature type="topological domain" description="Extracellular" evidence="2">
    <location>
        <begin position="32"/>
        <end position="2380"/>
    </location>
</feature>
<feature type="transmembrane region" description="Helical; Name=1" evidence="2">
    <location>
        <begin position="2381"/>
        <end position="2401"/>
    </location>
</feature>
<feature type="topological domain" description="Cytoplasmic" evidence="2">
    <location>
        <begin position="2402"/>
        <end position="2416"/>
    </location>
</feature>
<feature type="transmembrane region" description="Helical; Name=2" evidence="2">
    <location>
        <begin position="2417"/>
        <end position="2437"/>
    </location>
</feature>
<feature type="topological domain" description="Extracellular" evidence="2">
    <location>
        <position position="2438"/>
    </location>
</feature>
<feature type="transmembrane region" description="Helical; Name=3" evidence="2">
    <location>
        <begin position="2439"/>
        <end position="2459"/>
    </location>
</feature>
<feature type="topological domain" description="Cytoplasmic" evidence="2">
    <location>
        <begin position="2460"/>
        <end position="2480"/>
    </location>
</feature>
<feature type="transmembrane region" description="Helical; Name=4" evidence="2">
    <location>
        <begin position="2481"/>
        <end position="2501"/>
    </location>
</feature>
<feature type="topological domain" description="Extracellular" evidence="2">
    <location>
        <begin position="2502"/>
        <end position="2519"/>
    </location>
</feature>
<feature type="transmembrane region" description="Helical; Name=5" evidence="2">
    <location>
        <begin position="2520"/>
        <end position="2540"/>
    </location>
</feature>
<feature type="topological domain" description="Cytoplasmic" evidence="2">
    <location>
        <begin position="2541"/>
        <end position="2560"/>
    </location>
</feature>
<feature type="transmembrane region" description="Helical; Name=6" evidence="2">
    <location>
        <begin position="2561"/>
        <end position="2581"/>
    </location>
</feature>
<feature type="topological domain" description="Extracellular" evidence="2">
    <location>
        <begin position="2582"/>
        <end position="2591"/>
    </location>
</feature>
<feature type="transmembrane region" description="Helical; Name=7" evidence="2">
    <location>
        <begin position="2592"/>
        <end position="2612"/>
    </location>
</feature>
<feature type="topological domain" description="Cytoplasmic" evidence="2">
    <location>
        <begin position="2613"/>
        <end position="2923"/>
    </location>
</feature>
<feature type="domain" description="Cadherin 1" evidence="3">
    <location>
        <begin position="182"/>
        <end position="289"/>
    </location>
</feature>
<feature type="domain" description="Cadherin 2" evidence="3">
    <location>
        <begin position="290"/>
        <end position="399"/>
    </location>
</feature>
<feature type="domain" description="Cadherin 3" evidence="3">
    <location>
        <begin position="400"/>
        <end position="505"/>
    </location>
</feature>
<feature type="domain" description="Cadherin 4" evidence="3">
    <location>
        <begin position="506"/>
        <end position="610"/>
    </location>
</feature>
<feature type="domain" description="Cadherin 5" evidence="3">
    <location>
        <begin position="611"/>
        <end position="712"/>
    </location>
</feature>
<feature type="domain" description="Cadherin 6" evidence="3">
    <location>
        <begin position="713"/>
        <end position="815"/>
    </location>
</feature>
<feature type="domain" description="Cadherin 7" evidence="3">
    <location>
        <begin position="816"/>
        <end position="921"/>
    </location>
</feature>
<feature type="domain" description="Cadherin 8" evidence="3">
    <location>
        <begin position="922"/>
        <end position="1023"/>
    </location>
</feature>
<feature type="domain" description="Cadherin 9" evidence="3">
    <location>
        <begin position="1028"/>
        <end position="1146"/>
    </location>
</feature>
<feature type="domain" description="EGF-like 1; calcium-binding" evidence="4">
    <location>
        <begin position="1228"/>
        <end position="1286"/>
    </location>
</feature>
<feature type="domain" description="EGF-like 2; calcium-binding" evidence="4">
    <location>
        <begin position="1288"/>
        <end position="1324"/>
    </location>
</feature>
<feature type="domain" description="EGF-like 3; calcium-binding" evidence="4">
    <location>
        <begin position="1328"/>
        <end position="1366"/>
    </location>
</feature>
<feature type="domain" description="Laminin G-like 1" evidence="6">
    <location>
        <begin position="1367"/>
        <end position="1571"/>
    </location>
</feature>
<feature type="domain" description="EGF-like 4; calcium-binding" evidence="4">
    <location>
        <begin position="1574"/>
        <end position="1610"/>
    </location>
</feature>
<feature type="domain" description="Laminin G-like 2" evidence="6">
    <location>
        <begin position="1614"/>
        <end position="1791"/>
    </location>
</feature>
<feature type="domain" description="EGF-like 5; calcium-binding" evidence="4">
    <location>
        <begin position="1793"/>
        <end position="1828"/>
    </location>
</feature>
<feature type="domain" description="EGF-like 6; calcium-binding" evidence="4">
    <location>
        <begin position="1829"/>
        <end position="1867"/>
    </location>
</feature>
<feature type="domain" description="EGF-like 7; calcium-binding" evidence="4">
    <location>
        <begin position="1883"/>
        <end position="1922"/>
    </location>
</feature>
<feature type="domain" description="Laminin EGF-like" evidence="7">
    <location>
        <begin position="1924"/>
        <end position="1971"/>
    </location>
</feature>
<feature type="domain" description="GAIN-B" evidence="5">
    <location>
        <begin position="2199"/>
        <end position="2369"/>
    </location>
</feature>
<feature type="region of interest" description="Disordered" evidence="8">
    <location>
        <begin position="154"/>
        <end position="198"/>
    </location>
</feature>
<feature type="region of interest" description="Disordered" evidence="8">
    <location>
        <begin position="2213"/>
        <end position="2238"/>
    </location>
</feature>
<feature type="region of interest" description="GPS" evidence="5">
    <location>
        <begin position="2319"/>
        <end position="2369"/>
    </location>
</feature>
<feature type="region of interest" description="Disordered" evidence="8">
    <location>
        <begin position="2688"/>
        <end position="2838"/>
    </location>
</feature>
<feature type="region of interest" description="Disordered" evidence="8">
    <location>
        <begin position="2854"/>
        <end position="2888"/>
    </location>
</feature>
<feature type="compositionally biased region" description="Basic and acidic residues" evidence="8">
    <location>
        <begin position="158"/>
        <end position="168"/>
    </location>
</feature>
<feature type="compositionally biased region" description="Polar residues" evidence="8">
    <location>
        <begin position="175"/>
        <end position="196"/>
    </location>
</feature>
<feature type="compositionally biased region" description="Acidic residues" evidence="8">
    <location>
        <begin position="2718"/>
        <end position="2730"/>
    </location>
</feature>
<feature type="compositionally biased region" description="Acidic residues" evidence="8">
    <location>
        <begin position="2742"/>
        <end position="2753"/>
    </location>
</feature>
<feature type="compositionally biased region" description="Basic and acidic residues" evidence="8">
    <location>
        <begin position="2807"/>
        <end position="2819"/>
    </location>
</feature>
<feature type="compositionally biased region" description="Low complexity" evidence="8">
    <location>
        <begin position="2863"/>
        <end position="2873"/>
    </location>
</feature>
<feature type="site" description="Cleavage; by autolysis" evidence="5">
    <location>
        <begin position="2356"/>
        <end position="2357"/>
    </location>
</feature>
<feature type="modified residue" description="(3R)-3-hydroxyasparagine" evidence="2">
    <location>
        <position position="1591"/>
    </location>
</feature>
<feature type="modified residue" description="(3R)-3-hydroxyasparagine" evidence="2">
    <location>
        <position position="1810"/>
    </location>
</feature>
<feature type="glycosylation site" description="N-linked (GlcNAc...) asparagine" evidence="2">
    <location>
        <position position="486"/>
    </location>
</feature>
<feature type="glycosylation site" description="N-linked (GlcNAc...) asparagine" evidence="2">
    <location>
        <position position="557"/>
    </location>
</feature>
<feature type="glycosylation site" description="N-linked (GlcNAc...) asparagine" evidence="2">
    <location>
        <position position="701"/>
    </location>
</feature>
<feature type="glycosylation site" description="N-linked (GlcNAc...) asparagine" evidence="2">
    <location>
        <position position="1036"/>
    </location>
</feature>
<feature type="glycosylation site" description="N-linked (GlcNAc...) asparagine" evidence="2">
    <location>
        <position position="1076"/>
    </location>
</feature>
<feature type="glycosylation site" description="N-linked (GlcNAc...) asparagine" evidence="2">
    <location>
        <position position="1182"/>
    </location>
</feature>
<feature type="glycosylation site" description="N-linked (GlcNAc...) asparagine" evidence="2">
    <location>
        <position position="1212"/>
    </location>
</feature>
<feature type="glycosylation site" description="N-linked (GlcNAc...) asparagine" evidence="2">
    <location>
        <position position="1501"/>
    </location>
</feature>
<feature type="glycosylation site" description="N-linked (GlcNAc...) asparagine" evidence="2">
    <location>
        <position position="1565"/>
    </location>
</feature>
<feature type="glycosylation site" description="N-linked (GlcNAc...) asparagine" evidence="2">
    <location>
        <position position="1741"/>
    </location>
</feature>
<feature type="glycosylation site" description="N-linked (GlcNAc...) asparagine" evidence="2">
    <location>
        <position position="1827"/>
    </location>
</feature>
<feature type="glycosylation site" description="N-linked (GlcNAc...) asparagine" evidence="2">
    <location>
        <position position="1900"/>
    </location>
</feature>
<feature type="glycosylation site" description="N-linked (GlcNAc...) asparagine" evidence="2">
    <location>
        <position position="2024"/>
    </location>
</feature>
<feature type="glycosylation site" description="N-linked (GlcNAc...) asparagine" evidence="2">
    <location>
        <position position="2043"/>
    </location>
</feature>
<feature type="glycosylation site" description="N-linked (GlcNAc...) asparagine" evidence="2">
    <location>
        <position position="2061"/>
    </location>
</feature>
<feature type="glycosylation site" description="N-linked (GlcNAc...) asparagine" evidence="2">
    <location>
        <position position="2323"/>
    </location>
</feature>
<feature type="glycosylation site" description="N-linked (GlcNAc...) asparagine" evidence="2">
    <location>
        <position position="2345"/>
    </location>
</feature>
<feature type="disulfide bond" evidence="1">
    <location>
        <begin position="1232"/>
        <end position="1243"/>
    </location>
</feature>
<feature type="disulfide bond" evidence="1">
    <location>
        <begin position="1237"/>
        <end position="1274"/>
    </location>
</feature>
<feature type="disulfide bond" evidence="1">
    <location>
        <begin position="1276"/>
        <end position="1285"/>
    </location>
</feature>
<feature type="disulfide bond" evidence="1">
    <location>
        <begin position="1292"/>
        <end position="1303"/>
    </location>
</feature>
<feature type="disulfide bond" evidence="1">
    <location>
        <begin position="1297"/>
        <end position="1312"/>
    </location>
</feature>
<feature type="disulfide bond" evidence="1">
    <location>
        <begin position="1314"/>
        <end position="1323"/>
    </location>
</feature>
<feature type="disulfide bond" evidence="1">
    <location>
        <begin position="1332"/>
        <end position="1343"/>
    </location>
</feature>
<feature type="disulfide bond" evidence="1">
    <location>
        <begin position="1337"/>
        <end position="1353"/>
    </location>
</feature>
<feature type="disulfide bond" evidence="1">
    <location>
        <begin position="1355"/>
        <end position="1365"/>
    </location>
</feature>
<feature type="disulfide bond" evidence="1">
    <location>
        <begin position="1545"/>
        <end position="1571"/>
    </location>
</feature>
<feature type="disulfide bond" evidence="1">
    <location>
        <begin position="1578"/>
        <end position="1589"/>
    </location>
</feature>
<feature type="disulfide bond" evidence="1">
    <location>
        <begin position="1583"/>
        <end position="1598"/>
    </location>
</feature>
<feature type="disulfide bond" evidence="1">
    <location>
        <begin position="1600"/>
        <end position="1609"/>
    </location>
</feature>
<feature type="disulfide bond" evidence="1">
    <location>
        <begin position="1761"/>
        <end position="1791"/>
    </location>
</feature>
<feature type="disulfide bond" evidence="1">
    <location>
        <begin position="1797"/>
        <end position="1808"/>
    </location>
</feature>
<feature type="disulfide bond" evidence="1">
    <location>
        <begin position="1802"/>
        <end position="1817"/>
    </location>
</feature>
<feature type="disulfide bond" evidence="1">
    <location>
        <begin position="1819"/>
        <end position="1828"/>
    </location>
</feature>
<feature type="disulfide bond" evidence="1">
    <location>
        <begin position="1832"/>
        <end position="1843"/>
    </location>
</feature>
<feature type="disulfide bond" evidence="1">
    <location>
        <begin position="1837"/>
        <end position="1855"/>
    </location>
</feature>
<feature type="disulfide bond" evidence="1">
    <location>
        <begin position="1857"/>
        <end position="1866"/>
    </location>
</feature>
<feature type="disulfide bond" evidence="1">
    <location>
        <begin position="1887"/>
        <end position="1899"/>
    </location>
</feature>
<feature type="disulfide bond" evidence="1">
    <location>
        <begin position="1889"/>
        <end position="1906"/>
    </location>
</feature>
<feature type="disulfide bond" evidence="1">
    <location>
        <begin position="1908"/>
        <end position="1921"/>
    </location>
</feature>
<feature type="disulfide bond" evidence="1">
    <location>
        <begin position="1924"/>
        <end position="1936"/>
    </location>
</feature>
<feature type="disulfide bond" evidence="1">
    <location>
        <begin position="1926"/>
        <end position="1943"/>
    </location>
</feature>
<feature type="disulfide bond" evidence="1">
    <location>
        <begin position="1945"/>
        <end position="1954"/>
    </location>
</feature>
<feature type="disulfide bond" evidence="1">
    <location>
        <begin position="1957"/>
        <end position="1969"/>
    </location>
</feature>
<feature type="disulfide bond" evidence="5">
    <location>
        <begin position="2319"/>
        <end position="2351"/>
    </location>
</feature>
<feature type="disulfide bond" evidence="5">
    <location>
        <begin position="2339"/>
        <end position="2353"/>
    </location>
</feature>
<feature type="sequence variant" id="VAR_049474" description="In dbSNP:rs12083590.">
    <original>R</original>
    <variation>Q</variation>
    <location>
        <position position="1066"/>
    </location>
</feature>
<feature type="sequence variant" id="VAR_024481" description="In dbSNP:rs653635." evidence="10">
    <original>Y</original>
    <variation>H</variation>
    <location>
        <position position="1639"/>
    </location>
</feature>
<feature type="sequence variant" id="VAR_049475" description="In dbSNP:rs12567377.">
    <original>G</original>
    <variation>R</variation>
    <location>
        <position position="1992"/>
    </location>
</feature>
<feature type="sequence variant" id="VAR_049476" description="In dbSNP:rs17035649.">
    <original>T</original>
    <variation>A</variation>
    <location>
        <position position="2387"/>
    </location>
</feature>
<feature type="sequence variant" id="VAR_083430" description="Found in a patient with congenital hydrocephalus; uncertain significance; dbSNP:rs149683589." evidence="9">
    <original>R</original>
    <variation>W</variation>
    <location>
        <position position="2812"/>
    </location>
</feature>